<gene>
    <name type="primary">yfeH</name>
    <name type="ordered locus">b2410</name>
    <name type="ordered locus">JW5876</name>
</gene>
<keyword id="KW-1185">Reference proteome</keyword>
<keyword id="KW-0769">Symport</keyword>
<keyword id="KW-0813">Transport</keyword>
<comment type="similarity">
    <text evidence="1">Belongs to the bile acid:sodium symporter (BASS) (TC 2.A.28) family.</text>
</comment>
<protein>
    <recommendedName>
        <fullName>Putative symporter YfeH</fullName>
    </recommendedName>
</protein>
<sequence>MKLFRILDPFTLTLITVVLLASFFPARGDFVPFFENLTTAAIALLFFMHGAKLSREAIIAGGGHWRLHLWVMCSTFVLFPILGVLFAWWKPVNVDPMLYSGFLYLCILPATVQSAIAFTSMAGGNVAAAVCSASASSLLGIFLSPLLVGLVMNVHGAGGSLEQVGKIMLQLLLPFVLGHLSRPWIGDWVSRNKKWIAKTDQTSILLVVYTAFSEAVVNGIWHKVGWGSLLFIVVVSCVLLAIVIVVNVFMARRLSFNKADEITIVFCGSKKSLANGIPMANILFPTSVIGMMVLPLMIFHQIQLMVCAVLARRYKRQTEQLQAQQESSADKA</sequence>
<feature type="chain" id="PRO_0000169221" description="Putative symporter YfeH">
    <location>
        <begin position="1"/>
        <end position="332"/>
    </location>
</feature>
<feature type="sequence conflict" description="In Ref. 4; M24278." evidence="1" ref="4">
    <original>QESSADKA</original>
    <variation>RKAAPIKLKADASGAGPVASAPRF</variation>
    <location>
        <begin position="325"/>
        <end position="332"/>
    </location>
</feature>
<dbReference type="EMBL" id="U00096">
    <property type="protein sequence ID" value="AAC75463.1"/>
    <property type="molecule type" value="Genomic_DNA"/>
</dbReference>
<dbReference type="EMBL" id="AP009048">
    <property type="protein sequence ID" value="BAA16281.2"/>
    <property type="molecule type" value="Genomic_DNA"/>
</dbReference>
<dbReference type="EMBL" id="M24278">
    <property type="status" value="NOT_ANNOTATED_CDS"/>
    <property type="molecule type" value="Genomic_DNA"/>
</dbReference>
<dbReference type="PIR" id="A65015">
    <property type="entry name" value="A65015"/>
</dbReference>
<dbReference type="RefSeq" id="NP_416905.1">
    <property type="nucleotide sequence ID" value="NC_000913.3"/>
</dbReference>
<dbReference type="RefSeq" id="WP_000765610.1">
    <property type="nucleotide sequence ID" value="NZ_LN832404.1"/>
</dbReference>
<dbReference type="SMR" id="P39836"/>
<dbReference type="BioGRID" id="4259668">
    <property type="interactions" value="228"/>
</dbReference>
<dbReference type="FunCoup" id="P39836">
    <property type="interactions" value="499"/>
</dbReference>
<dbReference type="STRING" id="511145.b2410"/>
<dbReference type="TCDB" id="2.A.28.3.4">
    <property type="family name" value="the bile acid:na(+) symporter (bass) family"/>
</dbReference>
<dbReference type="PaxDb" id="511145-b2410"/>
<dbReference type="DNASU" id="946874"/>
<dbReference type="EnsemblBacteria" id="AAC75463">
    <property type="protein sequence ID" value="AAC75463"/>
    <property type="gene ID" value="b2410"/>
</dbReference>
<dbReference type="GeneID" id="946874"/>
<dbReference type="KEGG" id="ecj:JW5876"/>
<dbReference type="KEGG" id="eco:b2410"/>
<dbReference type="KEGG" id="ecoc:C3026_13395"/>
<dbReference type="PATRIC" id="fig|1411691.4.peg.4322"/>
<dbReference type="EchoBASE" id="EB2279"/>
<dbReference type="eggNOG" id="COG0385">
    <property type="taxonomic scope" value="Bacteria"/>
</dbReference>
<dbReference type="HOGENOM" id="CLU_039013_1_0_6"/>
<dbReference type="InParanoid" id="P39836"/>
<dbReference type="OMA" id="RYVFKQL"/>
<dbReference type="OrthoDB" id="9792271at2"/>
<dbReference type="PhylomeDB" id="P39836"/>
<dbReference type="BioCyc" id="EcoCyc:EG12376-MONOMER"/>
<dbReference type="PRO" id="PR:P39836"/>
<dbReference type="Proteomes" id="UP000000625">
    <property type="component" value="Chromosome"/>
</dbReference>
<dbReference type="GO" id="GO:0005886">
    <property type="term" value="C:plasma membrane"/>
    <property type="evidence" value="ECO:0000314"/>
    <property type="project" value="EcoCyc"/>
</dbReference>
<dbReference type="GO" id="GO:0015293">
    <property type="term" value="F:symporter activity"/>
    <property type="evidence" value="ECO:0007669"/>
    <property type="project" value="UniProtKB-KW"/>
</dbReference>
<dbReference type="FunFam" id="1.20.1530.20:FF:000005">
    <property type="entry name" value="Transporter, bile acid/Na+ symporter family"/>
    <property type="match status" value="1"/>
</dbReference>
<dbReference type="Gene3D" id="1.20.1530.20">
    <property type="match status" value="1"/>
</dbReference>
<dbReference type="InterPro" id="IPR038770">
    <property type="entry name" value="Na+/solute_symporter_sf"/>
</dbReference>
<dbReference type="InterPro" id="IPR016833">
    <property type="entry name" value="Put_Na-Bile_cotransptr"/>
</dbReference>
<dbReference type="PANTHER" id="PTHR18640:SF5">
    <property type="entry name" value="SODIUM_BILE ACID COTRANSPORTER 7"/>
    <property type="match status" value="1"/>
</dbReference>
<dbReference type="PANTHER" id="PTHR18640">
    <property type="entry name" value="SOLUTE CARRIER FAMILY 10 MEMBER 7"/>
    <property type="match status" value="1"/>
</dbReference>
<dbReference type="Pfam" id="PF13593">
    <property type="entry name" value="SBF_like"/>
    <property type="match status" value="1"/>
</dbReference>
<dbReference type="PIRSF" id="PIRSF026166">
    <property type="entry name" value="UCP026166"/>
    <property type="match status" value="1"/>
</dbReference>
<proteinExistence type="inferred from homology"/>
<reference key="1">
    <citation type="journal article" date="1997" name="DNA Res.">
        <title>Construction of a contiguous 874-kb sequence of the Escherichia coli-K12 genome corresponding to 50.0-68.8 min on the linkage map and analysis of its sequence features.</title>
        <authorList>
            <person name="Yamamoto Y."/>
            <person name="Aiba H."/>
            <person name="Baba T."/>
            <person name="Hayashi K."/>
            <person name="Inada T."/>
            <person name="Isono K."/>
            <person name="Itoh T."/>
            <person name="Kimura S."/>
            <person name="Kitagawa M."/>
            <person name="Makino K."/>
            <person name="Miki T."/>
            <person name="Mitsuhashi N."/>
            <person name="Mizobuchi K."/>
            <person name="Mori H."/>
            <person name="Nakade S."/>
            <person name="Nakamura Y."/>
            <person name="Nashimoto H."/>
            <person name="Oshima T."/>
            <person name="Oyama S."/>
            <person name="Saito N."/>
            <person name="Sampei G."/>
            <person name="Satoh Y."/>
            <person name="Sivasundaram S."/>
            <person name="Tagami H."/>
            <person name="Takahashi H."/>
            <person name="Takeda J."/>
            <person name="Takemoto K."/>
            <person name="Uehara K."/>
            <person name="Wada C."/>
            <person name="Yamagata S."/>
            <person name="Horiuchi T."/>
        </authorList>
    </citation>
    <scope>NUCLEOTIDE SEQUENCE [LARGE SCALE GENOMIC DNA]</scope>
    <source>
        <strain>K12 / W3110 / ATCC 27325 / DSM 5911</strain>
    </source>
</reference>
<reference key="2">
    <citation type="journal article" date="1997" name="Science">
        <title>The complete genome sequence of Escherichia coli K-12.</title>
        <authorList>
            <person name="Blattner F.R."/>
            <person name="Plunkett G. III"/>
            <person name="Bloch C.A."/>
            <person name="Perna N.T."/>
            <person name="Burland V."/>
            <person name="Riley M."/>
            <person name="Collado-Vides J."/>
            <person name="Glasner J.D."/>
            <person name="Rode C.K."/>
            <person name="Mayhew G.F."/>
            <person name="Gregor J."/>
            <person name="Davis N.W."/>
            <person name="Kirkpatrick H.A."/>
            <person name="Goeden M.A."/>
            <person name="Rose D.J."/>
            <person name="Mau B."/>
            <person name="Shao Y."/>
        </authorList>
    </citation>
    <scope>NUCLEOTIDE SEQUENCE [LARGE SCALE GENOMIC DNA]</scope>
    <source>
        <strain>K12 / MG1655 / ATCC 47076</strain>
    </source>
</reference>
<reference key="3">
    <citation type="journal article" date="2006" name="Mol. Syst. Biol.">
        <title>Highly accurate genome sequences of Escherichia coli K-12 strains MG1655 and W3110.</title>
        <authorList>
            <person name="Hayashi K."/>
            <person name="Morooka N."/>
            <person name="Yamamoto Y."/>
            <person name="Fujita K."/>
            <person name="Isono K."/>
            <person name="Choi S."/>
            <person name="Ohtsubo E."/>
            <person name="Baba T."/>
            <person name="Wanner B.L."/>
            <person name="Mori H."/>
            <person name="Horiuchi T."/>
        </authorList>
    </citation>
    <scope>NUCLEOTIDE SEQUENCE [LARGE SCALE GENOMIC DNA]</scope>
    <source>
        <strain>K12 / W3110 / ATCC 27325 / DSM 5911</strain>
    </source>
</reference>
<reference key="4">
    <citation type="submission" date="1989-04" db="EMBL/GenBank/DDBJ databases">
        <authorList>
            <person name="O'Connor M.J."/>
            <person name="Ally A."/>
            <person name="Ally D."/>
            <person name="Zhang X."/>
            <person name="Robichaud M."/>
            <person name="Backman K."/>
        </authorList>
    </citation>
    <scope>NUCLEOTIDE SEQUENCE [GENOMIC DNA] OF 94-332</scope>
</reference>
<reference key="5">
    <citation type="journal article" date="1994" name="Nucleic Acids Res.">
        <title>Intrinsic and extrinsic approaches for detecting genes in a bacterial genome.</title>
        <authorList>
            <person name="Borodovsky M."/>
            <person name="Rudd K.E."/>
            <person name="Koonin E.V."/>
        </authorList>
    </citation>
    <scope>IDENTIFICATION</scope>
</reference>
<accession>P39836</accession>
<accession>P76532</accession>
<accession>P76958</accession>
<evidence type="ECO:0000305" key="1"/>
<organism>
    <name type="scientific">Escherichia coli (strain K12)</name>
    <dbReference type="NCBI Taxonomy" id="83333"/>
    <lineage>
        <taxon>Bacteria</taxon>
        <taxon>Pseudomonadati</taxon>
        <taxon>Pseudomonadota</taxon>
        <taxon>Gammaproteobacteria</taxon>
        <taxon>Enterobacterales</taxon>
        <taxon>Enterobacteriaceae</taxon>
        <taxon>Escherichia</taxon>
    </lineage>
</organism>
<name>YFEH_ECOLI</name>